<accession>P41932</accession>
<accession>Q21537</accession>
<organism>
    <name type="scientific">Caenorhabditis elegans</name>
    <dbReference type="NCBI Taxonomy" id="6239"/>
    <lineage>
        <taxon>Eukaryota</taxon>
        <taxon>Metazoa</taxon>
        <taxon>Ecdysozoa</taxon>
        <taxon>Nematoda</taxon>
        <taxon>Chromadorea</taxon>
        <taxon>Rhabditida</taxon>
        <taxon>Rhabditina</taxon>
        <taxon>Rhabditomorpha</taxon>
        <taxon>Rhabditoidea</taxon>
        <taxon>Rhabditidae</taxon>
        <taxon>Peloderinae</taxon>
        <taxon>Caenorhabditis</taxon>
    </lineage>
</organism>
<evidence type="ECO:0000269" key="1">
    <source>
    </source>
</evidence>
<evidence type="ECO:0000269" key="2">
    <source>
    </source>
</evidence>
<evidence type="ECO:0000269" key="3">
    <source>
    </source>
</evidence>
<evidence type="ECO:0000305" key="4"/>
<keyword id="KW-0963">Cytoplasm</keyword>
<keyword id="KW-0539">Nucleus</keyword>
<keyword id="KW-1185">Reference proteome</keyword>
<reference key="1">
    <citation type="journal article" date="1994" name="Gene">
        <title>Isolation and sequence analysis of a Caenorhabditis elegans cDNA which encodes a 14-3-3 homologue.</title>
        <authorList>
            <person name="Wang W."/>
            <person name="Shakes D.C."/>
        </authorList>
    </citation>
    <scope>NUCLEOTIDE SEQUENCE [MRNA]</scope>
    <source>
        <strain>Bristol N2</strain>
    </source>
</reference>
<reference key="2">
    <citation type="journal article" date="1998" name="Science">
        <title>Genome sequence of the nematode C. elegans: a platform for investigating biology.</title>
        <authorList>
            <consortium name="The C. elegans sequencing consortium"/>
        </authorList>
    </citation>
    <scope>NUCLEOTIDE SEQUENCE [LARGE SCALE GENOMIC DNA]</scope>
    <source>
        <strain>Bristol N2</strain>
    </source>
</reference>
<reference key="3">
    <citation type="journal article" date="2006" name="Cell">
        <title>C. elegans SIR-2.1 interacts with 14-3-3 proteins to activate DAF-16 and extend life span.</title>
        <authorList>
            <person name="Berdichevsky A."/>
            <person name="Viswanathan M."/>
            <person name="Horvitz H.R."/>
            <person name="Guarente L."/>
        </authorList>
    </citation>
    <scope>IDENTIFICATION BY MASS SPECTROMETRY</scope>
    <scope>INTERACTION WITH DAF-16 AND SIR-2.1</scope>
    <scope>SUBCELLULAR LOCATION</scope>
</reference>
<reference key="4">
    <citation type="journal article" date="2011" name="PLoS Genet.">
        <title>The evolutionarily conserved longevity determinants HCF-1 and SIR-2.1/SIRT1 collaborate to regulate DAF-16/FOXO.</title>
        <authorList>
            <person name="Rizki G."/>
            <person name="Iwata T.N."/>
            <person name="Li J."/>
            <person name="Riedel C.G."/>
            <person name="Picard C.L."/>
            <person name="Jan M."/>
            <person name="Murphy C.T."/>
            <person name="Lee S.S."/>
        </authorList>
    </citation>
    <scope>FUNCTION</scope>
    <scope>INTERACTION WITH HCF-1</scope>
</reference>
<reference key="5">
    <citation type="journal article" date="2015" name="PLoS ONE">
        <title>AMP-activated kinase regulates lipid droplet localization and stability of adipose triglyceride lipase in C. elegans dauer larvae.</title>
        <authorList>
            <person name="Xie M."/>
            <person name="Roy R."/>
        </authorList>
    </citation>
    <scope>INTERACTION WITH ATGL-1</scope>
</reference>
<dbReference type="EMBL" id="U05038">
    <property type="protein sequence ID" value="AAA61872.1"/>
    <property type="molecule type" value="mRNA"/>
</dbReference>
<dbReference type="EMBL" id="Z73910">
    <property type="protein sequence ID" value="CAA98138.1"/>
    <property type="molecule type" value="Genomic_DNA"/>
</dbReference>
<dbReference type="PIR" id="JC2581">
    <property type="entry name" value="JC2581"/>
</dbReference>
<dbReference type="PIR" id="T23759">
    <property type="entry name" value="T23759"/>
</dbReference>
<dbReference type="RefSeq" id="NP_001369936.1">
    <property type="nucleotide sequence ID" value="NM_001383210.2"/>
</dbReference>
<dbReference type="RefSeq" id="NP_502235.1">
    <property type="nucleotide sequence ID" value="NM_069834.5"/>
</dbReference>
<dbReference type="SMR" id="P41932"/>
<dbReference type="BioGRID" id="43208">
    <property type="interactions" value="43"/>
</dbReference>
<dbReference type="ComplexPortal" id="CPX-3884">
    <property type="entry name" value="daf-16-par-5 complex"/>
</dbReference>
<dbReference type="ComplexPortal" id="CPX-3886">
    <property type="entry name" value="sir-2.1-par-5 complex"/>
</dbReference>
<dbReference type="DIP" id="DIP-27044N"/>
<dbReference type="FunCoup" id="P41932">
    <property type="interactions" value="2947"/>
</dbReference>
<dbReference type="IntAct" id="P41932">
    <property type="interactions" value="12"/>
</dbReference>
<dbReference type="STRING" id="6239.M117.2a.1"/>
<dbReference type="iPTMnet" id="P41932"/>
<dbReference type="PaxDb" id="6239-M117.2a.2"/>
<dbReference type="PeptideAtlas" id="P41932"/>
<dbReference type="EnsemblMetazoa" id="M117.2a.1">
    <property type="protein sequence ID" value="M117.2a.1"/>
    <property type="gene ID" value="WBGene00003920"/>
</dbReference>
<dbReference type="EnsemblMetazoa" id="M117.2a.2">
    <property type="protein sequence ID" value="M117.2a.2"/>
    <property type="gene ID" value="WBGene00003920"/>
</dbReference>
<dbReference type="EnsemblMetazoa" id="M117.2a.3">
    <property type="protein sequence ID" value="M117.2a.3"/>
    <property type="gene ID" value="WBGene00003920"/>
</dbReference>
<dbReference type="EnsemblMetazoa" id="M117.2a.4">
    <property type="protein sequence ID" value="M117.2a.4"/>
    <property type="gene ID" value="WBGene00003920"/>
</dbReference>
<dbReference type="GeneID" id="178113"/>
<dbReference type="UCSC" id="M117.2.2">
    <property type="organism name" value="c. elegans"/>
</dbReference>
<dbReference type="AGR" id="WB:WBGene00003920"/>
<dbReference type="WormBase" id="M117.2a">
    <property type="protein sequence ID" value="CE06200"/>
    <property type="gene ID" value="WBGene00003920"/>
    <property type="gene designation" value="par-5"/>
</dbReference>
<dbReference type="eggNOG" id="KOG0841">
    <property type="taxonomic scope" value="Eukaryota"/>
</dbReference>
<dbReference type="GeneTree" id="ENSGT01090000260040"/>
<dbReference type="HOGENOM" id="CLU_058290_1_0_1"/>
<dbReference type="InParanoid" id="P41932"/>
<dbReference type="OMA" id="CNDVLXT"/>
<dbReference type="OrthoDB" id="10260625at2759"/>
<dbReference type="PhylomeDB" id="P41932"/>
<dbReference type="Reactome" id="R-CEL-165159">
    <property type="pathway name" value="MTOR signalling"/>
</dbReference>
<dbReference type="Reactome" id="R-CEL-166208">
    <property type="pathway name" value="mTORC1-mediated signalling"/>
</dbReference>
<dbReference type="Reactome" id="R-CEL-170968">
    <property type="pathway name" value="Frs2-mediated activation"/>
</dbReference>
<dbReference type="Reactome" id="R-CEL-2028269">
    <property type="pathway name" value="Signaling by Hippo"/>
</dbReference>
<dbReference type="Reactome" id="R-CEL-3769402">
    <property type="pathway name" value="Deactivation of the beta-catenin transactivating complex"/>
</dbReference>
<dbReference type="Reactome" id="R-CEL-392517">
    <property type="pathway name" value="Rap1 signalling"/>
</dbReference>
<dbReference type="Reactome" id="R-CEL-430116">
    <property type="pathway name" value="GP1b-IX-V activation signalling"/>
</dbReference>
<dbReference type="Reactome" id="R-CEL-450385">
    <property type="pathway name" value="Butyrate Response Factor 1 (BRF1) binds and destabilizes mRNA"/>
</dbReference>
<dbReference type="Reactome" id="R-CEL-450513">
    <property type="pathway name" value="Tristetraprolin (TTP, ZFP36) binds and destabilizes mRNA"/>
</dbReference>
<dbReference type="Reactome" id="R-CEL-450604">
    <property type="pathway name" value="KSRP (KHSRP) binds and destabilizes mRNA"/>
</dbReference>
<dbReference type="Reactome" id="R-CEL-5625740">
    <property type="pathway name" value="RHO GTPases activate PKNs"/>
</dbReference>
<dbReference type="Reactome" id="R-CEL-5673000">
    <property type="pathway name" value="RAF activation"/>
</dbReference>
<dbReference type="Reactome" id="R-CEL-5674135">
    <property type="pathway name" value="MAP2K and MAPK activation"/>
</dbReference>
<dbReference type="Reactome" id="R-CEL-5675221">
    <property type="pathway name" value="Negative regulation of MAPK pathway"/>
</dbReference>
<dbReference type="Reactome" id="R-CEL-6804114">
    <property type="pathway name" value="TP53 Regulates Transcription of Genes Involved in G2 Cell Cycle Arrest"/>
</dbReference>
<dbReference type="Reactome" id="R-CEL-75035">
    <property type="pathway name" value="Chk1/Chk2(Cds1) mediated inactivation of Cyclin B:Cdk1 complex"/>
</dbReference>
<dbReference type="Reactome" id="R-CEL-9013700">
    <property type="pathway name" value="NOTCH4 Activation and Transmission of Signal to the Nucleus"/>
</dbReference>
<dbReference type="Reactome" id="R-CEL-9614399">
    <property type="pathway name" value="Regulation of localization of FOXO transcription factors"/>
</dbReference>
<dbReference type="SignaLink" id="P41932"/>
<dbReference type="PRO" id="PR:P41932"/>
<dbReference type="Proteomes" id="UP000001940">
    <property type="component" value="Chromosome IV"/>
</dbReference>
<dbReference type="Bgee" id="WBGene00003920">
    <property type="expression patterns" value="Expressed in reproductive system and 7 other cell types or tissues"/>
</dbReference>
<dbReference type="ExpressionAtlas" id="P41932">
    <property type="expression patterns" value="baseline and differential"/>
</dbReference>
<dbReference type="GO" id="GO:0005938">
    <property type="term" value="C:cell cortex"/>
    <property type="evidence" value="ECO:0000314"/>
    <property type="project" value="WormBase"/>
</dbReference>
<dbReference type="GO" id="GO:0005737">
    <property type="term" value="C:cytoplasm"/>
    <property type="evidence" value="ECO:0000314"/>
    <property type="project" value="WormBase"/>
</dbReference>
<dbReference type="GO" id="GO:0005634">
    <property type="term" value="C:nucleus"/>
    <property type="evidence" value="ECO:0000314"/>
    <property type="project" value="WormBase"/>
</dbReference>
<dbReference type="GO" id="GO:0045167">
    <property type="term" value="P:asymmetric protein localization involved in cell fate determination"/>
    <property type="evidence" value="ECO:0000315"/>
    <property type="project" value="WormBase"/>
</dbReference>
<dbReference type="GO" id="GO:0001708">
    <property type="term" value="P:cell fate specification"/>
    <property type="evidence" value="ECO:0000315"/>
    <property type="project" value="WormBase"/>
</dbReference>
<dbReference type="GO" id="GO:0008340">
    <property type="term" value="P:determination of adult lifespan"/>
    <property type="evidence" value="ECO:0000316"/>
    <property type="project" value="UniProtKB"/>
</dbReference>
<dbReference type="GO" id="GO:0009792">
    <property type="term" value="P:embryo development ending in birth or egg hatching"/>
    <property type="evidence" value="ECO:0000315"/>
    <property type="project" value="WormBase"/>
</dbReference>
<dbReference type="GO" id="GO:0000132">
    <property type="term" value="P:establishment of mitotic spindle orientation"/>
    <property type="evidence" value="ECO:0000315"/>
    <property type="project" value="WormBase"/>
</dbReference>
<dbReference type="GO" id="GO:0030590">
    <property type="term" value="P:first cell cycle pseudocleavage"/>
    <property type="evidence" value="ECO:0000315"/>
    <property type="project" value="WormBase"/>
</dbReference>
<dbReference type="GO" id="GO:0010286">
    <property type="term" value="P:heat acclimation"/>
    <property type="evidence" value="ECO:0000315"/>
    <property type="project" value="UniProtKB"/>
</dbReference>
<dbReference type="GO" id="GO:0051457">
    <property type="term" value="P:maintenance of protein location in nucleus"/>
    <property type="evidence" value="ECO:0000303"/>
    <property type="project" value="ComplexPortal"/>
</dbReference>
<dbReference type="GO" id="GO:0051321">
    <property type="term" value="P:meiotic cell cycle"/>
    <property type="evidence" value="ECO:0000315"/>
    <property type="project" value="WormBase"/>
</dbReference>
<dbReference type="GO" id="GO:0010629">
    <property type="term" value="P:negative regulation of gene expression"/>
    <property type="evidence" value="ECO:0000303"/>
    <property type="project" value="ComplexPortal"/>
</dbReference>
<dbReference type="GO" id="GO:0009949">
    <property type="term" value="P:polarity specification of anterior/posterior axis"/>
    <property type="evidence" value="ECO:0000315"/>
    <property type="project" value="WormBase"/>
</dbReference>
<dbReference type="GO" id="GO:0035046">
    <property type="term" value="P:pronuclear migration"/>
    <property type="evidence" value="ECO:0000315"/>
    <property type="project" value="WormBase"/>
</dbReference>
<dbReference type="GO" id="GO:0006611">
    <property type="term" value="P:protein export from nucleus"/>
    <property type="evidence" value="ECO:0000315"/>
    <property type="project" value="WormBase"/>
</dbReference>
<dbReference type="GO" id="GO:0008104">
    <property type="term" value="P:protein localization"/>
    <property type="evidence" value="ECO:0000318"/>
    <property type="project" value="GO_Central"/>
</dbReference>
<dbReference type="GO" id="GO:0010468">
    <property type="term" value="P:regulation of gene expression"/>
    <property type="evidence" value="ECO:0000303"/>
    <property type="project" value="ComplexPortal"/>
</dbReference>
<dbReference type="GO" id="GO:0007346">
    <property type="term" value="P:regulation of mitotic cell cycle"/>
    <property type="evidence" value="ECO:0000315"/>
    <property type="project" value="WormBase"/>
</dbReference>
<dbReference type="GO" id="GO:0022414">
    <property type="term" value="P:reproductive process"/>
    <property type="evidence" value="ECO:0000315"/>
    <property type="project" value="WormBase"/>
</dbReference>
<dbReference type="GO" id="GO:0007165">
    <property type="term" value="P:signal transduction"/>
    <property type="evidence" value="ECO:0000318"/>
    <property type="project" value="GO_Central"/>
</dbReference>
<dbReference type="GO" id="GO:0010070">
    <property type="term" value="P:zygote asymmetric cell division"/>
    <property type="evidence" value="ECO:0000315"/>
    <property type="project" value="WormBase"/>
</dbReference>
<dbReference type="FunFam" id="1.20.190.20:FF:000001">
    <property type="entry name" value="14-3-3 gamma 1"/>
    <property type="match status" value="1"/>
</dbReference>
<dbReference type="Gene3D" id="1.20.190.20">
    <property type="entry name" value="14-3-3 domain"/>
    <property type="match status" value="1"/>
</dbReference>
<dbReference type="InterPro" id="IPR000308">
    <property type="entry name" value="14-3-3"/>
</dbReference>
<dbReference type="InterPro" id="IPR023409">
    <property type="entry name" value="14-3-3_CS"/>
</dbReference>
<dbReference type="InterPro" id="IPR036815">
    <property type="entry name" value="14-3-3_dom_sf"/>
</dbReference>
<dbReference type="InterPro" id="IPR023410">
    <property type="entry name" value="14-3-3_domain"/>
</dbReference>
<dbReference type="PANTHER" id="PTHR18860">
    <property type="entry name" value="14-3-3 PROTEIN"/>
    <property type="match status" value="1"/>
</dbReference>
<dbReference type="Pfam" id="PF00244">
    <property type="entry name" value="14-3-3"/>
    <property type="match status" value="1"/>
</dbReference>
<dbReference type="PIRSF" id="PIRSF000868">
    <property type="entry name" value="14-3-3"/>
    <property type="match status" value="1"/>
</dbReference>
<dbReference type="PRINTS" id="PR00305">
    <property type="entry name" value="1433ZETA"/>
</dbReference>
<dbReference type="SMART" id="SM00101">
    <property type="entry name" value="14_3_3"/>
    <property type="match status" value="1"/>
</dbReference>
<dbReference type="SUPFAM" id="SSF48445">
    <property type="entry name" value="14-3-3 protein"/>
    <property type="match status" value="1"/>
</dbReference>
<dbReference type="PROSITE" id="PS00796">
    <property type="entry name" value="1433_1"/>
    <property type="match status" value="1"/>
</dbReference>
<dbReference type="PROSITE" id="PS00797">
    <property type="entry name" value="1433_2"/>
    <property type="match status" value="1"/>
</dbReference>
<sequence>MSDTVEELVQRAKLAEQAERYDDMAAAMKKVTEQGQELSNEERNLLSVAYKNVVGARRSSWRVISSIEQKTEGSEKKQQLAKEYRVKVEQELNDICQDVLKLLDEFLIVKAGAAESKVFYLKMKGDYYRYLAEVASEDRAAVVEKSQKAYQEALDIAKDKMQPTHPIRLGLALNFSVFYYEILNTPEHACQLAKQAFDDAIAELDTLNEDSYKDSTLIMQLLRDNLTLWTSDVGAEDQEQEGNQEAGN</sequence>
<name>14331_CAEEL</name>
<feature type="chain" id="PRO_0000058647" description="14-3-3-like protein 1">
    <location>
        <begin position="1"/>
        <end position="248"/>
    </location>
</feature>
<feature type="sequence conflict" description="In Ref. 1; AAA61872." evidence="4" ref="1">
    <original>V</original>
    <variation>A</variation>
    <location>
        <position position="118"/>
    </location>
</feature>
<comment type="function">
    <text evidence="2">Required to modulate lifespan, in concert with hcf-1, acting redundantly with 14-3-3-like protein ftt-2.</text>
</comment>
<comment type="subunit">
    <text evidence="1 2 3">Interacts with daf-16 and sir-2.1 (PubMed:16777605). Interacts with atgl-1 (PubMed:26098762). Interacts with hcf-1 (PubMed:21909281).</text>
</comment>
<comment type="interaction">
    <interactant intactId="EBI-318108">
        <id>P41932</id>
    </interactant>
    <interactant intactId="EBI-4480523">
        <id>G5EC23</id>
        <label>hcf-1</label>
    </interactant>
    <organismsDiffer>false</organismsDiffer>
    <experiments>2</experiments>
</comment>
<comment type="interaction">
    <interactant intactId="EBI-318108">
        <id>P41932</id>
    </interactant>
    <interactant intactId="EBI-3843983">
        <id>Q11184</id>
        <label>let-756</label>
    </interactant>
    <organismsDiffer>false</organismsDiffer>
    <experiments>3</experiments>
</comment>
<comment type="interaction">
    <interactant intactId="EBI-318108">
        <id>P41932</id>
    </interactant>
    <interactant intactId="EBI-317870">
        <id>Q10666</id>
        <label>pop-1</label>
    </interactant>
    <organismsDiffer>false</organismsDiffer>
    <experiments>2</experiments>
</comment>
<comment type="interaction">
    <interactant intactId="EBI-318108">
        <id>P41932</id>
    </interactant>
    <interactant intactId="EBI-966082">
        <id>Q21921</id>
        <label>sir-2.1</label>
    </interactant>
    <organismsDiffer>false</organismsDiffer>
    <experiments>3</experiments>
</comment>
<comment type="subcellular location">
    <subcellularLocation>
        <location evidence="1">Cytoplasm</location>
    </subcellularLocation>
    <subcellularLocation>
        <location evidence="1">Nucleus</location>
    </subcellularLocation>
</comment>
<comment type="similarity">
    <text evidence="4">Belongs to the 14-3-3 family.</text>
</comment>
<gene>
    <name type="primary">par-5</name>
    <name type="synonym">ftt-1</name>
    <name type="ORF">M117.2</name>
</gene>
<proteinExistence type="evidence at protein level"/>
<protein>
    <recommendedName>
        <fullName>14-3-3-like protein 1</fullName>
    </recommendedName>
    <alternativeName>
        <fullName>Partitioning defective protein 5</fullName>
    </alternativeName>
</protein>